<protein>
    <recommendedName>
        <fullName evidence="1">UPF0735 ACT domain-containing protein SH1278</fullName>
    </recommendedName>
</protein>
<proteinExistence type="inferred from homology"/>
<feature type="chain" id="PRO_0000366324" description="UPF0735 ACT domain-containing protein SH1278">
    <location>
        <begin position="1"/>
        <end position="151"/>
    </location>
</feature>
<feature type="domain" description="ACT" evidence="1">
    <location>
        <begin position="74"/>
        <end position="149"/>
    </location>
</feature>
<dbReference type="EMBL" id="AP006716">
    <property type="protein sequence ID" value="BAE04587.1"/>
    <property type="molecule type" value="Genomic_DNA"/>
</dbReference>
<dbReference type="RefSeq" id="WP_011275576.1">
    <property type="nucleotide sequence ID" value="NC_007168.1"/>
</dbReference>
<dbReference type="KEGG" id="sha:SH1278"/>
<dbReference type="eggNOG" id="COG4492">
    <property type="taxonomic scope" value="Bacteria"/>
</dbReference>
<dbReference type="HOGENOM" id="CLU_128147_0_0_9"/>
<dbReference type="OrthoDB" id="9788773at2"/>
<dbReference type="Proteomes" id="UP000000543">
    <property type="component" value="Chromosome"/>
</dbReference>
<dbReference type="Gene3D" id="3.30.70.260">
    <property type="match status" value="1"/>
</dbReference>
<dbReference type="HAMAP" id="MF_00707">
    <property type="entry name" value="UPF0735"/>
    <property type="match status" value="1"/>
</dbReference>
<dbReference type="InterPro" id="IPR045865">
    <property type="entry name" value="ACT-like_dom_sf"/>
</dbReference>
<dbReference type="InterPro" id="IPR002912">
    <property type="entry name" value="ACT_dom"/>
</dbReference>
<dbReference type="InterPro" id="IPR008310">
    <property type="entry name" value="UPF0735_ACT_dom-cont"/>
</dbReference>
<dbReference type="NCBIfam" id="NF003361">
    <property type="entry name" value="PRK04435.1"/>
    <property type="match status" value="1"/>
</dbReference>
<dbReference type="PIRSF" id="PIRSF025624">
    <property type="entry name" value="ACT_PheB"/>
    <property type="match status" value="1"/>
</dbReference>
<dbReference type="SUPFAM" id="SSF55021">
    <property type="entry name" value="ACT-like"/>
    <property type="match status" value="1"/>
</dbReference>
<dbReference type="PROSITE" id="PS51671">
    <property type="entry name" value="ACT"/>
    <property type="match status" value="1"/>
</dbReference>
<accession>Q4L6Y8</accession>
<sequence>MDNNDYKKFYLIREDVLPESVVKTLKIKDALKNNPELSIYEAVKLFDLSRSAFYKYRETIFPVDEKMLDHREFTLILYVNDIVGMLAQVLNTVSKLQLSVLTIHQSVPMEEKATITLSLSAKDTTISIDEIIKALRNIEHVSKVELISMSM</sequence>
<gene>
    <name type="ordered locus">SH1278</name>
</gene>
<evidence type="ECO:0000255" key="1">
    <source>
        <dbReference type="HAMAP-Rule" id="MF_00707"/>
    </source>
</evidence>
<comment type="similarity">
    <text evidence="1">Belongs to the UPF0735 family.</text>
</comment>
<reference key="1">
    <citation type="journal article" date="2005" name="J. Bacteriol.">
        <title>Whole-genome sequencing of Staphylococcus haemolyticus uncovers the extreme plasticity of its genome and the evolution of human-colonizing staphylococcal species.</title>
        <authorList>
            <person name="Takeuchi F."/>
            <person name="Watanabe S."/>
            <person name="Baba T."/>
            <person name="Yuzawa H."/>
            <person name="Ito T."/>
            <person name="Morimoto Y."/>
            <person name="Kuroda M."/>
            <person name="Cui L."/>
            <person name="Takahashi M."/>
            <person name="Ankai A."/>
            <person name="Baba S."/>
            <person name="Fukui S."/>
            <person name="Lee J.C."/>
            <person name="Hiramatsu K."/>
        </authorList>
    </citation>
    <scope>NUCLEOTIDE SEQUENCE [LARGE SCALE GENOMIC DNA]</scope>
    <source>
        <strain>JCSC1435</strain>
    </source>
</reference>
<organism>
    <name type="scientific">Staphylococcus haemolyticus (strain JCSC1435)</name>
    <dbReference type="NCBI Taxonomy" id="279808"/>
    <lineage>
        <taxon>Bacteria</taxon>
        <taxon>Bacillati</taxon>
        <taxon>Bacillota</taxon>
        <taxon>Bacilli</taxon>
        <taxon>Bacillales</taxon>
        <taxon>Staphylococcaceae</taxon>
        <taxon>Staphylococcus</taxon>
    </lineage>
</organism>
<name>Y1278_STAHJ</name>